<feature type="chain" id="PRO_1000163962" description="Ornithine carbamoyltransferase">
    <location>
        <begin position="1"/>
        <end position="321"/>
    </location>
</feature>
<feature type="binding site" evidence="2">
    <location>
        <begin position="53"/>
        <end position="56"/>
    </location>
    <ligand>
        <name>carbamoyl phosphate</name>
        <dbReference type="ChEBI" id="CHEBI:58228"/>
    </ligand>
</feature>
<feature type="binding site" evidence="2">
    <location>
        <position position="80"/>
    </location>
    <ligand>
        <name>carbamoyl phosphate</name>
        <dbReference type="ChEBI" id="CHEBI:58228"/>
    </ligand>
</feature>
<feature type="binding site" evidence="2">
    <location>
        <position position="104"/>
    </location>
    <ligand>
        <name>carbamoyl phosphate</name>
        <dbReference type="ChEBI" id="CHEBI:58228"/>
    </ligand>
</feature>
<feature type="binding site" evidence="2">
    <location>
        <begin position="131"/>
        <end position="134"/>
    </location>
    <ligand>
        <name>carbamoyl phosphate</name>
        <dbReference type="ChEBI" id="CHEBI:58228"/>
    </ligand>
</feature>
<feature type="binding site" evidence="2">
    <location>
        <position position="166"/>
    </location>
    <ligand>
        <name>L-ornithine</name>
        <dbReference type="ChEBI" id="CHEBI:46911"/>
    </ligand>
</feature>
<feature type="binding site" evidence="2">
    <location>
        <position position="230"/>
    </location>
    <ligand>
        <name>L-ornithine</name>
        <dbReference type="ChEBI" id="CHEBI:46911"/>
    </ligand>
</feature>
<feature type="binding site" evidence="2">
    <location>
        <begin position="234"/>
        <end position="235"/>
    </location>
    <ligand>
        <name>L-ornithine</name>
        <dbReference type="ChEBI" id="CHEBI:46911"/>
    </ligand>
</feature>
<feature type="binding site" evidence="2">
    <location>
        <begin position="270"/>
        <end position="271"/>
    </location>
    <ligand>
        <name>carbamoyl phosphate</name>
        <dbReference type="ChEBI" id="CHEBI:58228"/>
    </ligand>
</feature>
<feature type="binding site" evidence="2">
    <location>
        <position position="298"/>
    </location>
    <ligand>
        <name>carbamoyl phosphate</name>
        <dbReference type="ChEBI" id="CHEBI:58228"/>
    </ligand>
</feature>
<dbReference type="EC" id="2.1.3.3" evidence="2"/>
<dbReference type="EMBL" id="CP001095">
    <property type="protein sequence ID" value="ACJ52951.1"/>
    <property type="molecule type" value="Genomic_DNA"/>
</dbReference>
<dbReference type="EMBL" id="AP010889">
    <property type="protein sequence ID" value="BAJ69522.1"/>
    <property type="status" value="ALT_INIT"/>
    <property type="molecule type" value="Genomic_DNA"/>
</dbReference>
<dbReference type="SMR" id="B7GTP2"/>
<dbReference type="KEGG" id="bln:Blon_1877"/>
<dbReference type="KEGG" id="blon:BLIJ_1943"/>
<dbReference type="PATRIC" id="fig|391904.8.peg.1948"/>
<dbReference type="HOGENOM" id="CLU_043846_3_2_11"/>
<dbReference type="UniPathway" id="UPA00254">
    <property type="reaction ID" value="UER00365"/>
</dbReference>
<dbReference type="Proteomes" id="UP000001360">
    <property type="component" value="Chromosome"/>
</dbReference>
<dbReference type="GO" id="GO:0005737">
    <property type="term" value="C:cytoplasm"/>
    <property type="evidence" value="ECO:0007669"/>
    <property type="project" value="UniProtKB-SubCell"/>
</dbReference>
<dbReference type="GO" id="GO:0016597">
    <property type="term" value="F:amino acid binding"/>
    <property type="evidence" value="ECO:0007669"/>
    <property type="project" value="InterPro"/>
</dbReference>
<dbReference type="GO" id="GO:0004585">
    <property type="term" value="F:ornithine carbamoyltransferase activity"/>
    <property type="evidence" value="ECO:0007669"/>
    <property type="project" value="UniProtKB-UniRule"/>
</dbReference>
<dbReference type="GO" id="GO:0042450">
    <property type="term" value="P:arginine biosynthetic process via ornithine"/>
    <property type="evidence" value="ECO:0007669"/>
    <property type="project" value="TreeGrafter"/>
</dbReference>
<dbReference type="GO" id="GO:0019547">
    <property type="term" value="P:arginine catabolic process to ornithine"/>
    <property type="evidence" value="ECO:0007669"/>
    <property type="project" value="UniProtKB-UniRule"/>
</dbReference>
<dbReference type="GO" id="GO:0019240">
    <property type="term" value="P:citrulline biosynthetic process"/>
    <property type="evidence" value="ECO:0007669"/>
    <property type="project" value="TreeGrafter"/>
</dbReference>
<dbReference type="FunFam" id="3.40.50.1370:FF:000008">
    <property type="entry name" value="Ornithine carbamoyltransferase"/>
    <property type="match status" value="1"/>
</dbReference>
<dbReference type="Gene3D" id="3.40.50.1370">
    <property type="entry name" value="Aspartate/ornithine carbamoyltransferase"/>
    <property type="match status" value="2"/>
</dbReference>
<dbReference type="HAMAP" id="MF_01109">
    <property type="entry name" value="OTCase"/>
    <property type="match status" value="1"/>
</dbReference>
<dbReference type="InterPro" id="IPR006132">
    <property type="entry name" value="Asp/Orn_carbamoyltranf_P-bd"/>
</dbReference>
<dbReference type="InterPro" id="IPR006130">
    <property type="entry name" value="Asp/Orn_carbamoylTrfase"/>
</dbReference>
<dbReference type="InterPro" id="IPR036901">
    <property type="entry name" value="Asp/Orn_carbamoylTrfase_sf"/>
</dbReference>
<dbReference type="InterPro" id="IPR006131">
    <property type="entry name" value="Asp_carbamoyltransf_Asp/Orn-bd"/>
</dbReference>
<dbReference type="InterPro" id="IPR002292">
    <property type="entry name" value="Orn/put_carbamltrans"/>
</dbReference>
<dbReference type="InterPro" id="IPR024904">
    <property type="entry name" value="OTCase_ArgI"/>
</dbReference>
<dbReference type="NCBIfam" id="TIGR00658">
    <property type="entry name" value="orni_carb_tr"/>
    <property type="match status" value="1"/>
</dbReference>
<dbReference type="NCBIfam" id="NF001986">
    <property type="entry name" value="PRK00779.1"/>
    <property type="match status" value="1"/>
</dbReference>
<dbReference type="PANTHER" id="PTHR45753">
    <property type="entry name" value="ORNITHINE CARBAMOYLTRANSFERASE, MITOCHONDRIAL"/>
    <property type="match status" value="1"/>
</dbReference>
<dbReference type="PANTHER" id="PTHR45753:SF3">
    <property type="entry name" value="ORNITHINE TRANSCARBAMYLASE, MITOCHONDRIAL"/>
    <property type="match status" value="1"/>
</dbReference>
<dbReference type="Pfam" id="PF00185">
    <property type="entry name" value="OTCace"/>
    <property type="match status" value="1"/>
</dbReference>
<dbReference type="Pfam" id="PF02729">
    <property type="entry name" value="OTCace_N"/>
    <property type="match status" value="1"/>
</dbReference>
<dbReference type="PRINTS" id="PR00100">
    <property type="entry name" value="AOTCASE"/>
</dbReference>
<dbReference type="PRINTS" id="PR00102">
    <property type="entry name" value="OTCASE"/>
</dbReference>
<dbReference type="SUPFAM" id="SSF53671">
    <property type="entry name" value="Aspartate/ornithine carbamoyltransferase"/>
    <property type="match status" value="1"/>
</dbReference>
<dbReference type="PROSITE" id="PS00097">
    <property type="entry name" value="CARBAMOYLTRANSFERASE"/>
    <property type="match status" value="1"/>
</dbReference>
<comment type="function">
    <text evidence="1">Reversibly catalyzes the transfer of the carbamoyl group from carbamoyl phosphate (CP) to the N(epsilon) atom of ornithine (ORN) to produce L-citrulline.</text>
</comment>
<comment type="catalytic activity">
    <reaction evidence="2">
        <text>carbamoyl phosphate + L-ornithine = L-citrulline + phosphate + H(+)</text>
        <dbReference type="Rhea" id="RHEA:19513"/>
        <dbReference type="ChEBI" id="CHEBI:15378"/>
        <dbReference type="ChEBI" id="CHEBI:43474"/>
        <dbReference type="ChEBI" id="CHEBI:46911"/>
        <dbReference type="ChEBI" id="CHEBI:57743"/>
        <dbReference type="ChEBI" id="CHEBI:58228"/>
        <dbReference type="EC" id="2.1.3.3"/>
    </reaction>
</comment>
<comment type="pathway">
    <text evidence="2">Amino-acid degradation; L-arginine degradation via ADI pathway; carbamoyl phosphate from L-arginine: step 2/2.</text>
</comment>
<comment type="subcellular location">
    <subcellularLocation>
        <location evidence="2">Cytoplasm</location>
    </subcellularLocation>
</comment>
<comment type="similarity">
    <text evidence="2">Belongs to the aspartate/ornithine carbamoyltransferase superfamily. OTCase family.</text>
</comment>
<comment type="sequence caution" evidence="3">
    <conflict type="erroneous initiation">
        <sequence resource="EMBL-CDS" id="BAJ69522"/>
    </conflict>
    <text>Truncated N-terminus.</text>
</comment>
<name>OTC_BIFLS</name>
<protein>
    <recommendedName>
        <fullName evidence="2">Ornithine carbamoyltransferase</fullName>
        <shortName evidence="2">OTCase</shortName>
        <ecNumber evidence="2">2.1.3.3</ecNumber>
    </recommendedName>
</protein>
<evidence type="ECO:0000250" key="1"/>
<evidence type="ECO:0000255" key="2">
    <source>
        <dbReference type="HAMAP-Rule" id="MF_01109"/>
    </source>
</evidence>
<evidence type="ECO:0000305" key="3"/>
<gene>
    <name evidence="2" type="primary">arcB</name>
    <name type="ordered locus">Blon_1877</name>
    <name type="ordered locus">BLIJ_1943</name>
</gene>
<sequence>MTPELRHMLRDDDLNHEEQKQVLELAIKFHHDRFYKQPFAGPQAVAVLFDKPSTRTRSSFSIGVAELGGYPLVIDKSGSQLGRGEPVADTARVLDRMAYGVVWRTFGQDRVEEMAKYSTHPVVNALTDDFHPCQILADFQTIAEHRGGVDNLKNQTIAYLGDAANNMANSYLLGGAVAGMDVRVAGPHGYLPRPDIVADAKRVAAETGGSILVTTDAKEAVKDADCVFTDTWVSMGEEAEYAIRSKPFWDYQVNTELMALAKPDALFQHCLPAYRGKEVTAEVIDGPQSVVWDEAENRLHAQKALLTWLTGKARGDESLLA</sequence>
<proteinExistence type="inferred from homology"/>
<accession>B7GTP2</accession>
<accession>E8MLU5</accession>
<reference key="1">
    <citation type="journal article" date="2008" name="Proc. Natl. Acad. Sci. U.S.A.">
        <title>The genome sequence of Bifidobacterium longum subsp. infantis reveals adaptations for milk utilization within the infant microbiome.</title>
        <authorList>
            <person name="Sela D.A."/>
            <person name="Chapman J."/>
            <person name="Adeuya A."/>
            <person name="Kim J.H."/>
            <person name="Chen F."/>
            <person name="Whitehead T.R."/>
            <person name="Lapidus A."/>
            <person name="Rokhsar D.S."/>
            <person name="Lebrilla C.B."/>
            <person name="German J.B."/>
            <person name="Price N.P."/>
            <person name="Richardson P.M."/>
            <person name="Mills D.A."/>
        </authorList>
    </citation>
    <scope>NUCLEOTIDE SEQUENCE [LARGE SCALE GENOMIC DNA]</scope>
    <source>
        <strain>ATCC 15697 / DSM 20088 / JCM 1222 / NCTC 11817 / S12</strain>
    </source>
</reference>
<reference key="2">
    <citation type="journal article" date="2011" name="Nature">
        <title>Bifidobacteria can protect from enteropathogenic infection through production of acetate.</title>
        <authorList>
            <person name="Fukuda S."/>
            <person name="Toh H."/>
            <person name="Hase K."/>
            <person name="Oshima K."/>
            <person name="Nakanishi Y."/>
            <person name="Yoshimura K."/>
            <person name="Tobe T."/>
            <person name="Clarke J.M."/>
            <person name="Topping D.L."/>
            <person name="Suzuki T."/>
            <person name="Taylor T.D."/>
            <person name="Itoh K."/>
            <person name="Kikuchi J."/>
            <person name="Morita H."/>
            <person name="Hattori M."/>
            <person name="Ohno H."/>
        </authorList>
    </citation>
    <scope>NUCLEOTIDE SEQUENCE [LARGE SCALE GENOMIC DNA]</scope>
    <source>
        <strain>ATCC 15697 / DSM 20088 / JCM 1222 / NCTC 11817 / S12</strain>
    </source>
</reference>
<organism>
    <name type="scientific">Bifidobacterium longum subsp. infantis (strain ATCC 15697 / DSM 20088 / JCM 1222 / NCTC 11817 / S12)</name>
    <dbReference type="NCBI Taxonomy" id="391904"/>
    <lineage>
        <taxon>Bacteria</taxon>
        <taxon>Bacillati</taxon>
        <taxon>Actinomycetota</taxon>
        <taxon>Actinomycetes</taxon>
        <taxon>Bifidobacteriales</taxon>
        <taxon>Bifidobacteriaceae</taxon>
        <taxon>Bifidobacterium</taxon>
    </lineage>
</organism>
<keyword id="KW-0056">Arginine metabolism</keyword>
<keyword id="KW-0963">Cytoplasm</keyword>
<keyword id="KW-0808">Transferase</keyword>